<protein>
    <recommendedName>
        <fullName evidence="1">Ubiquinone biosynthesis protein COQ4, mitochondrial</fullName>
    </recommendedName>
    <alternativeName>
        <fullName evidence="1">4-hydroxy-3-methoxy-5-polyprenylbenzoate decarboxylase</fullName>
        <ecNumber evidence="1">4.1.1.130</ecNumber>
    </alternativeName>
    <alternativeName>
        <fullName evidence="1">Coenzyme Q biosynthesis protein 4</fullName>
    </alternativeName>
</protein>
<proteinExistence type="inferred from homology"/>
<organism>
    <name type="scientific">Saccharomyces cerevisiae (strain YJM789)</name>
    <name type="common">Baker's yeast</name>
    <dbReference type="NCBI Taxonomy" id="307796"/>
    <lineage>
        <taxon>Eukaryota</taxon>
        <taxon>Fungi</taxon>
        <taxon>Dikarya</taxon>
        <taxon>Ascomycota</taxon>
        <taxon>Saccharomycotina</taxon>
        <taxon>Saccharomycetes</taxon>
        <taxon>Saccharomycetales</taxon>
        <taxon>Saccharomycetaceae</taxon>
        <taxon>Saccharomyces</taxon>
    </lineage>
</organism>
<reference key="1">
    <citation type="journal article" date="2007" name="Proc. Natl. Acad. Sci. U.S.A.">
        <title>Genome sequencing and comparative analysis of Saccharomyces cerevisiae strain YJM789.</title>
        <authorList>
            <person name="Wei W."/>
            <person name="McCusker J.H."/>
            <person name="Hyman R.W."/>
            <person name="Jones T."/>
            <person name="Ning Y."/>
            <person name="Cao Z."/>
            <person name="Gu Z."/>
            <person name="Bruno D."/>
            <person name="Miranda M."/>
            <person name="Nguyen M."/>
            <person name="Wilhelmy J."/>
            <person name="Komp C."/>
            <person name="Tamse R."/>
            <person name="Wang X."/>
            <person name="Jia P."/>
            <person name="Luedi P."/>
            <person name="Oefner P.J."/>
            <person name="David L."/>
            <person name="Dietrich F.S."/>
            <person name="Li Y."/>
            <person name="Davis R.W."/>
            <person name="Steinmetz L.M."/>
        </authorList>
    </citation>
    <scope>NUCLEOTIDE SEQUENCE [LARGE SCALE GENOMIC DNA]</scope>
    <source>
        <strain>YJM789</strain>
    </source>
</reference>
<evidence type="ECO:0000255" key="1">
    <source>
        <dbReference type="HAMAP-Rule" id="MF_03111"/>
    </source>
</evidence>
<feature type="transit peptide" description="Mitochondrion" evidence="1">
    <location>
        <begin position="1"/>
        <end position="10"/>
    </location>
</feature>
<feature type="chain" id="PRO_0000388136" description="Ubiquinone biosynthesis protein COQ4, mitochondrial">
    <location>
        <begin position="11"/>
        <end position="335"/>
    </location>
</feature>
<feature type="binding site" evidence="1">
    <location>
        <position position="210"/>
    </location>
    <ligand>
        <name>Zn(2+)</name>
        <dbReference type="ChEBI" id="CHEBI:29105"/>
    </ligand>
</feature>
<feature type="binding site" evidence="1">
    <location>
        <position position="211"/>
    </location>
    <ligand>
        <name>Zn(2+)</name>
        <dbReference type="ChEBI" id="CHEBI:29105"/>
    </ligand>
</feature>
<feature type="binding site" evidence="1">
    <location>
        <position position="214"/>
    </location>
    <ligand>
        <name>Zn(2+)</name>
        <dbReference type="ChEBI" id="CHEBI:29105"/>
    </ligand>
</feature>
<feature type="binding site" evidence="1">
    <location>
        <position position="226"/>
    </location>
    <ligand>
        <name>Zn(2+)</name>
        <dbReference type="ChEBI" id="CHEBI:29105"/>
    </ligand>
</feature>
<accession>A6ZYG1</accession>
<sequence>MLRLSLLRSTATLPVKCQRRGLILPAAAMYTLGSLIFGKEARLADAMERGELHNKNVDYAKEAEERTELRIRALANTRSMEPRYNGHVPLHRYEKLLLFAISGWNSFFHPEDGYNIVQLGEATALPVFLENLKQTMLSDSSGRRILKEQPNITTEILHMDKLAKLPHNTFGYVYYQWLKRENVSPDTRAPVKFIDDPMHAYIFKRYRQCHDFYHAITNMPIIIEGEITIKALEGANLGVPMAILGGILAPLRLKKVQRKRLYNIYLPWAVRTGLSCKPLINVYWEEMLEKDVTALRKELKITLPPDLRTMRKERAALRKEIDAKYNSQKRATTPA</sequence>
<gene>
    <name evidence="1" type="primary">COQ4</name>
    <name type="ORF">SCY_1099</name>
</gene>
<dbReference type="EC" id="4.1.1.130" evidence="1"/>
<dbReference type="EMBL" id="AAFW02000145">
    <property type="protein sequence ID" value="EDN60541.1"/>
    <property type="molecule type" value="Genomic_DNA"/>
</dbReference>
<dbReference type="SMR" id="A6ZYG1"/>
<dbReference type="HOGENOM" id="CLU_061241_0_2_1"/>
<dbReference type="UniPathway" id="UPA00232"/>
<dbReference type="Proteomes" id="UP000007060">
    <property type="component" value="Unassembled WGS sequence"/>
</dbReference>
<dbReference type="GO" id="GO:0031314">
    <property type="term" value="C:extrinsic component of mitochondrial inner membrane"/>
    <property type="evidence" value="ECO:0007669"/>
    <property type="project" value="UniProtKB-UniRule"/>
</dbReference>
<dbReference type="GO" id="GO:0006744">
    <property type="term" value="P:ubiquinone biosynthetic process"/>
    <property type="evidence" value="ECO:0007669"/>
    <property type="project" value="UniProtKB-UniRule"/>
</dbReference>
<dbReference type="HAMAP" id="MF_03111">
    <property type="entry name" value="Coq4"/>
    <property type="match status" value="1"/>
</dbReference>
<dbReference type="InterPro" id="IPR007715">
    <property type="entry name" value="Coq4"/>
</dbReference>
<dbReference type="InterPro" id="IPR027540">
    <property type="entry name" value="Coq4_euk"/>
</dbReference>
<dbReference type="PANTHER" id="PTHR12922">
    <property type="entry name" value="UBIQUINONE BIOSYNTHESIS PROTEIN"/>
    <property type="match status" value="1"/>
</dbReference>
<dbReference type="PANTHER" id="PTHR12922:SF7">
    <property type="entry name" value="UBIQUINONE BIOSYNTHESIS PROTEIN COQ4 HOMOLOG, MITOCHONDRIAL"/>
    <property type="match status" value="1"/>
</dbReference>
<dbReference type="Pfam" id="PF05019">
    <property type="entry name" value="Coq4"/>
    <property type="match status" value="1"/>
</dbReference>
<name>COQ4_YEAS7</name>
<comment type="function">
    <text evidence="1">Lyase that catalyzes the C1-decarboxylation of 4-hydroxy-3-methoxy-5-(all-trans-hexaprenyl)benzoic acid into 2-methoxy-6-(all-trans-hexaprenyl)phenol during ubiquinone biosynthesis.</text>
</comment>
<comment type="catalytic activity">
    <reaction evidence="1">
        <text>4-hydroxy-3-methoxy-5-(all-trans-hexaprenyl)benzoate + H(+) = 2-methoxy-6-(all-trans-hexaprenyl)phenol + CO2</text>
        <dbReference type="Rhea" id="RHEA:44768"/>
        <dbReference type="ChEBI" id="CHEBI:1109"/>
        <dbReference type="ChEBI" id="CHEBI:15378"/>
        <dbReference type="ChEBI" id="CHEBI:16526"/>
        <dbReference type="ChEBI" id="CHEBI:57916"/>
        <dbReference type="EC" id="4.1.1.130"/>
    </reaction>
</comment>
<comment type="cofactor">
    <cofactor evidence="1">
        <name>Zn(2+)</name>
        <dbReference type="ChEBI" id="CHEBI:29105"/>
    </cofactor>
</comment>
<comment type="pathway">
    <text evidence="1">Cofactor biosynthesis; ubiquinone biosynthesis.</text>
</comment>
<comment type="subunit">
    <text evidence="1">Component of a multi-subunit COQ enzyme complex, composed of at least COQ3, COQ4, COQ5, COQ6, COQ7 and COQ9. Interacts with COQ3.</text>
</comment>
<comment type="subcellular location">
    <subcellularLocation>
        <location evidence="1">Mitochondrion inner membrane</location>
        <topology evidence="1">Peripheral membrane protein</topology>
        <orientation evidence="1">Matrix side</orientation>
    </subcellularLocation>
</comment>
<comment type="similarity">
    <text evidence="1">Belongs to the COQ4 family.</text>
</comment>
<keyword id="KW-0456">Lyase</keyword>
<keyword id="KW-0472">Membrane</keyword>
<keyword id="KW-0479">Metal-binding</keyword>
<keyword id="KW-0496">Mitochondrion</keyword>
<keyword id="KW-0999">Mitochondrion inner membrane</keyword>
<keyword id="KW-0809">Transit peptide</keyword>
<keyword id="KW-0831">Ubiquinone biosynthesis</keyword>
<keyword id="KW-0862">Zinc</keyword>